<sequence>MDPYKYRPASSYNSPFFTTNSGAPVWNNNSSMTVGPRGPILLEDYHLVEKLANFDRERIPERVVHARGASAKGFFEVTHDISNLTCADFLRAPGVQTPVIVRFSTVIHERGSPETLRDPRGFAVKFYTREGNFDLVGNNFPVFFIRDGMKFPDMVHALKPNPKSHIQENWRILDFFSHHPESLNMFTFLFDDIGIPQDYRHMDGSGVNTYMLINKAGKAHYVKFHWKPTCGVKSLLEEDAIRVGGTNHSHATQDLYDSIAAGNYPEWKLFIQIIDPADEDKFDFDPLDVTKTWPEDILPLQPVGRMVLNKNIDNFFAENEQLAFCPAIIVPGIHYSDDKLLQTRVFSYADTQRHRLGPNYLQLPVNAPKCAHHNNHHEGFMNFMHRDEEVNYFPSRYDQVRHAEKYPTPPAVCSGKRERCIIEKENNFKEPGERYRTFTPERQERFIQRWIDALSDPRITHEIRSIWISYWSQADKSLGQKLASRLNVRPSI</sequence>
<proteinExistence type="evidence at protein level"/>
<accession>P25819</accession>
<accession>O49615</accession>
<reference key="1">
    <citation type="journal article" date="1992" name="Plant Physiol.">
        <title>Nucleotide sequence of a cDNA for catalase from Arabidopsis thaliana.</title>
        <authorList>
            <person name="Chevalier C."/>
            <person name="Yamaguchi J."/>
            <person name="McCourt P."/>
        </authorList>
    </citation>
    <scope>NUCLEOTIDE SEQUENCE [MRNA]</scope>
    <source>
        <strain>cv. Columbia</strain>
    </source>
</reference>
<reference key="2">
    <citation type="online journal article" date="1996" name="Plant Gene Register">
        <title>A gene encoding a catalase isoform from Arabidopsis thaliana.</title>
        <authorList>
            <person name="Zentgraf U."/>
            <person name="Zinkernagel I."/>
        </authorList>
        <locator>PGR96-005</locator>
    </citation>
    <scope>NUCLEOTIDE SEQUENCE [GENOMIC DNA]</scope>
    <source>
        <strain>cv. Landsberg erecta</strain>
    </source>
</reference>
<reference key="3">
    <citation type="journal article" date="1999" name="Nature">
        <title>Sequence and analysis of chromosome 4 of the plant Arabidopsis thaliana.</title>
        <authorList>
            <person name="Mayer K.F.X."/>
            <person name="Schueller C."/>
            <person name="Wambutt R."/>
            <person name="Murphy G."/>
            <person name="Volckaert G."/>
            <person name="Pohl T."/>
            <person name="Duesterhoeft A."/>
            <person name="Stiekema W."/>
            <person name="Entian K.-D."/>
            <person name="Terryn N."/>
            <person name="Harris B."/>
            <person name="Ansorge W."/>
            <person name="Brandt P."/>
            <person name="Grivell L.A."/>
            <person name="Rieger M."/>
            <person name="Weichselgartner M."/>
            <person name="de Simone V."/>
            <person name="Obermaier B."/>
            <person name="Mache R."/>
            <person name="Mueller M."/>
            <person name="Kreis M."/>
            <person name="Delseny M."/>
            <person name="Puigdomenech P."/>
            <person name="Watson M."/>
            <person name="Schmidtheini T."/>
            <person name="Reichert B."/>
            <person name="Portetelle D."/>
            <person name="Perez-Alonso M."/>
            <person name="Boutry M."/>
            <person name="Bancroft I."/>
            <person name="Vos P."/>
            <person name="Hoheisel J."/>
            <person name="Zimmermann W."/>
            <person name="Wedler H."/>
            <person name="Ridley P."/>
            <person name="Langham S.-A."/>
            <person name="McCullagh B."/>
            <person name="Bilham L."/>
            <person name="Robben J."/>
            <person name="van der Schueren J."/>
            <person name="Grymonprez B."/>
            <person name="Chuang Y.-J."/>
            <person name="Vandenbussche F."/>
            <person name="Braeken M."/>
            <person name="Weltjens I."/>
            <person name="Voet M."/>
            <person name="Bastiaens I."/>
            <person name="Aert R."/>
            <person name="Defoor E."/>
            <person name="Weitzenegger T."/>
            <person name="Bothe G."/>
            <person name="Ramsperger U."/>
            <person name="Hilbert H."/>
            <person name="Braun M."/>
            <person name="Holzer E."/>
            <person name="Brandt A."/>
            <person name="Peters S."/>
            <person name="van Staveren M."/>
            <person name="Dirkse W."/>
            <person name="Mooijman P."/>
            <person name="Klein Lankhorst R."/>
            <person name="Rose M."/>
            <person name="Hauf J."/>
            <person name="Koetter P."/>
            <person name="Berneiser S."/>
            <person name="Hempel S."/>
            <person name="Feldpausch M."/>
            <person name="Lamberth S."/>
            <person name="Van den Daele H."/>
            <person name="De Keyser A."/>
            <person name="Buysshaert C."/>
            <person name="Gielen J."/>
            <person name="Villarroel R."/>
            <person name="De Clercq R."/>
            <person name="van Montagu M."/>
            <person name="Rogers J."/>
            <person name="Cronin A."/>
            <person name="Quail M.A."/>
            <person name="Bray-Allen S."/>
            <person name="Clark L."/>
            <person name="Doggett J."/>
            <person name="Hall S."/>
            <person name="Kay M."/>
            <person name="Lennard N."/>
            <person name="McLay K."/>
            <person name="Mayes R."/>
            <person name="Pettett A."/>
            <person name="Rajandream M.A."/>
            <person name="Lyne M."/>
            <person name="Benes V."/>
            <person name="Rechmann S."/>
            <person name="Borkova D."/>
            <person name="Bloecker H."/>
            <person name="Scharfe M."/>
            <person name="Grimm M."/>
            <person name="Loehnert T.-H."/>
            <person name="Dose S."/>
            <person name="de Haan M."/>
            <person name="Maarse A.C."/>
            <person name="Schaefer M."/>
            <person name="Mueller-Auer S."/>
            <person name="Gabel C."/>
            <person name="Fuchs M."/>
            <person name="Fartmann B."/>
            <person name="Granderath K."/>
            <person name="Dauner D."/>
            <person name="Herzl A."/>
            <person name="Neumann S."/>
            <person name="Argiriou A."/>
            <person name="Vitale D."/>
            <person name="Liguori R."/>
            <person name="Piravandi E."/>
            <person name="Massenet O."/>
            <person name="Quigley F."/>
            <person name="Clabauld G."/>
            <person name="Muendlein A."/>
            <person name="Felber R."/>
            <person name="Schnabl S."/>
            <person name="Hiller R."/>
            <person name="Schmidt W."/>
            <person name="Lecharny A."/>
            <person name="Aubourg S."/>
            <person name="Chefdor F."/>
            <person name="Cooke R."/>
            <person name="Berger C."/>
            <person name="Monfort A."/>
            <person name="Casacuberta E."/>
            <person name="Gibbons T."/>
            <person name="Weber N."/>
            <person name="Vandenbol M."/>
            <person name="Bargues M."/>
            <person name="Terol J."/>
            <person name="Torres A."/>
            <person name="Perez-Perez A."/>
            <person name="Purnelle B."/>
            <person name="Bent E."/>
            <person name="Johnson S."/>
            <person name="Tacon D."/>
            <person name="Jesse T."/>
            <person name="Heijnen L."/>
            <person name="Schwarz S."/>
            <person name="Scholler P."/>
            <person name="Heber S."/>
            <person name="Francs P."/>
            <person name="Bielke C."/>
            <person name="Frishman D."/>
            <person name="Haase D."/>
            <person name="Lemcke K."/>
            <person name="Mewes H.-W."/>
            <person name="Stocker S."/>
            <person name="Zaccaria P."/>
            <person name="Bevan M."/>
            <person name="Wilson R.K."/>
            <person name="de la Bastide M."/>
            <person name="Habermann K."/>
            <person name="Parnell L."/>
            <person name="Dedhia N."/>
            <person name="Gnoj L."/>
            <person name="Schutz K."/>
            <person name="Huang E."/>
            <person name="Spiegel L."/>
            <person name="Sekhon M."/>
            <person name="Murray J."/>
            <person name="Sheet P."/>
            <person name="Cordes M."/>
            <person name="Abu-Threideh J."/>
            <person name="Stoneking T."/>
            <person name="Kalicki J."/>
            <person name="Graves T."/>
            <person name="Harmon G."/>
            <person name="Edwards J."/>
            <person name="Latreille P."/>
            <person name="Courtney L."/>
            <person name="Cloud J."/>
            <person name="Abbott A."/>
            <person name="Scott K."/>
            <person name="Johnson D."/>
            <person name="Minx P."/>
            <person name="Bentley D."/>
            <person name="Fulton B."/>
            <person name="Miller N."/>
            <person name="Greco T."/>
            <person name="Kemp K."/>
            <person name="Kramer J."/>
            <person name="Fulton L."/>
            <person name="Mardis E."/>
            <person name="Dante M."/>
            <person name="Pepin K."/>
            <person name="Hillier L.W."/>
            <person name="Nelson J."/>
            <person name="Spieth J."/>
            <person name="Ryan E."/>
            <person name="Andrews S."/>
            <person name="Geisel C."/>
            <person name="Layman D."/>
            <person name="Du H."/>
            <person name="Ali J."/>
            <person name="Berghoff A."/>
            <person name="Jones K."/>
            <person name="Drone K."/>
            <person name="Cotton M."/>
            <person name="Joshu C."/>
            <person name="Antonoiu B."/>
            <person name="Zidanic M."/>
            <person name="Strong C."/>
            <person name="Sun H."/>
            <person name="Lamar B."/>
            <person name="Yordan C."/>
            <person name="Ma P."/>
            <person name="Zhong J."/>
            <person name="Preston R."/>
            <person name="Vil D."/>
            <person name="Shekher M."/>
            <person name="Matero A."/>
            <person name="Shah R."/>
            <person name="Swaby I.K."/>
            <person name="O'Shaughnessy A."/>
            <person name="Rodriguez M."/>
            <person name="Hoffman J."/>
            <person name="Till S."/>
            <person name="Granat S."/>
            <person name="Shohdy N."/>
            <person name="Hasegawa A."/>
            <person name="Hameed A."/>
            <person name="Lodhi M."/>
            <person name="Johnson A."/>
            <person name="Chen E."/>
            <person name="Marra M.A."/>
            <person name="Martienssen R."/>
            <person name="McCombie W.R."/>
        </authorList>
    </citation>
    <scope>NUCLEOTIDE SEQUENCE [LARGE SCALE GENOMIC DNA]</scope>
    <source>
        <strain>cv. Columbia</strain>
    </source>
</reference>
<reference key="4">
    <citation type="journal article" date="2017" name="Plant J.">
        <title>Araport11: a complete reannotation of the Arabidopsis thaliana reference genome.</title>
        <authorList>
            <person name="Cheng C.Y."/>
            <person name="Krishnakumar V."/>
            <person name="Chan A.P."/>
            <person name="Thibaud-Nissen F."/>
            <person name="Schobel S."/>
            <person name="Town C.D."/>
        </authorList>
    </citation>
    <scope>GENOME REANNOTATION</scope>
    <source>
        <strain>cv. Columbia</strain>
    </source>
</reference>
<reference key="5">
    <citation type="journal article" date="2003" name="Science">
        <title>Empirical analysis of transcriptional activity in the Arabidopsis genome.</title>
        <authorList>
            <person name="Yamada K."/>
            <person name="Lim J."/>
            <person name="Dale J.M."/>
            <person name="Chen H."/>
            <person name="Shinn P."/>
            <person name="Palm C.J."/>
            <person name="Southwick A.M."/>
            <person name="Wu H.C."/>
            <person name="Kim C.J."/>
            <person name="Nguyen M."/>
            <person name="Pham P.K."/>
            <person name="Cheuk R.F."/>
            <person name="Karlin-Newmann G."/>
            <person name="Liu S.X."/>
            <person name="Lam B."/>
            <person name="Sakano H."/>
            <person name="Wu T."/>
            <person name="Yu G."/>
            <person name="Miranda M."/>
            <person name="Quach H.L."/>
            <person name="Tripp M."/>
            <person name="Chang C.H."/>
            <person name="Lee J.M."/>
            <person name="Toriumi M.J."/>
            <person name="Chan M.M."/>
            <person name="Tang C.C."/>
            <person name="Onodera C.S."/>
            <person name="Deng J.M."/>
            <person name="Akiyama K."/>
            <person name="Ansari Y."/>
            <person name="Arakawa T."/>
            <person name="Banh J."/>
            <person name="Banno F."/>
            <person name="Bowser L."/>
            <person name="Brooks S.Y."/>
            <person name="Carninci P."/>
            <person name="Chao Q."/>
            <person name="Choy N."/>
            <person name="Enju A."/>
            <person name="Goldsmith A.D."/>
            <person name="Gurjal M."/>
            <person name="Hansen N.F."/>
            <person name="Hayashizaki Y."/>
            <person name="Johnson-Hopson C."/>
            <person name="Hsuan V.W."/>
            <person name="Iida K."/>
            <person name="Karnes M."/>
            <person name="Khan S."/>
            <person name="Koesema E."/>
            <person name="Ishida J."/>
            <person name="Jiang P.X."/>
            <person name="Jones T."/>
            <person name="Kawai J."/>
            <person name="Kamiya A."/>
            <person name="Meyers C."/>
            <person name="Nakajima M."/>
            <person name="Narusaka M."/>
            <person name="Seki M."/>
            <person name="Sakurai T."/>
            <person name="Satou M."/>
            <person name="Tamse R."/>
            <person name="Vaysberg M."/>
            <person name="Wallender E.K."/>
            <person name="Wong C."/>
            <person name="Yamamura Y."/>
            <person name="Yuan S."/>
            <person name="Shinozaki K."/>
            <person name="Davis R.W."/>
            <person name="Theologis A."/>
            <person name="Ecker J.R."/>
        </authorList>
    </citation>
    <scope>NUCLEOTIDE SEQUENCE [LARGE SCALE MRNA]</scope>
    <source>
        <strain>cv. Columbia</strain>
    </source>
</reference>
<reference key="6">
    <citation type="journal article" date="2007" name="Plant Cell">
        <title>Proteome analysis of Arabidopsis leaf peroxisomes reveals novel targeting peptides, metabolic pathways, and defense mechanisms.</title>
        <authorList>
            <person name="Reumann S."/>
            <person name="Babujee L."/>
            <person name="Ma C."/>
            <person name="Wienkoop S."/>
            <person name="Siemsen T."/>
            <person name="Antonicelli G.E."/>
            <person name="Rasche N."/>
            <person name="Lueder F."/>
            <person name="Weckwerth W."/>
            <person name="Jahn O."/>
        </authorList>
    </citation>
    <scope>IDENTIFICATION BY MASS SPECTROMETRY</scope>
</reference>
<reference key="7">
    <citation type="journal article" date="2013" name="Plant Physiol.">
        <title>LESION SIMULATING DISEASE1 interacts with catalases to regulate hypersensitive cell death in Arabidopsis.</title>
        <authorList>
            <person name="Li Y."/>
            <person name="Chen L."/>
            <person name="Mu J."/>
            <person name="Zuo J."/>
        </authorList>
    </citation>
    <scope>INTERACTION WITH LSD1</scope>
</reference>
<reference key="8">
    <citation type="journal article" date="2015" name="Plant Cell">
        <title>A chaperone function of NO CATALASE ACTIVITY1 is required to maintain catalase activity and for multiple stress responses in Arabidopsis.</title>
        <authorList>
            <person name="Li J."/>
            <person name="Liu J."/>
            <person name="Wang G."/>
            <person name="Cha J.Y."/>
            <person name="Li G."/>
            <person name="Chen S."/>
            <person name="Li Z."/>
            <person name="Guo J."/>
            <person name="Zhang C."/>
            <person name="Yang Y."/>
            <person name="Kim W.Y."/>
            <person name="Yun D.J."/>
            <person name="Schumaker K.S."/>
            <person name="Chen Z."/>
            <person name="Guo Y."/>
        </authorList>
    </citation>
    <scope>INTERACTION WITH NCA1</scope>
    <scope>SUBCELLULAR LOCATION</scope>
    <scope>SUBUNIT</scope>
</reference>
<dbReference type="EC" id="1.11.1.6" evidence="2"/>
<dbReference type="EMBL" id="X64271">
    <property type="protein sequence ID" value="CAA45564.1"/>
    <property type="molecule type" value="mRNA"/>
</dbReference>
<dbReference type="EMBL" id="X94447">
    <property type="protein sequence ID" value="CAA64220.1"/>
    <property type="molecule type" value="Genomic_DNA"/>
</dbReference>
<dbReference type="EMBL" id="AL022023">
    <property type="protein sequence ID" value="CAA17773.1"/>
    <property type="molecule type" value="Genomic_DNA"/>
</dbReference>
<dbReference type="EMBL" id="AL161586">
    <property type="protein sequence ID" value="CAB80226.1"/>
    <property type="molecule type" value="Genomic_DNA"/>
</dbReference>
<dbReference type="EMBL" id="CP002687">
    <property type="protein sequence ID" value="AEE86462.1"/>
    <property type="molecule type" value="Genomic_DNA"/>
</dbReference>
<dbReference type="EMBL" id="AY074301">
    <property type="protein sequence ID" value="AAL66998.1"/>
    <property type="molecule type" value="mRNA"/>
</dbReference>
<dbReference type="EMBL" id="AY113854">
    <property type="protein sequence ID" value="AAM44902.1"/>
    <property type="molecule type" value="mRNA"/>
</dbReference>
<dbReference type="PIR" id="T05779">
    <property type="entry name" value="T05779"/>
</dbReference>
<dbReference type="RefSeq" id="NP_195235.1">
    <molecule id="P25819-1"/>
    <property type="nucleotide sequence ID" value="NM_119675.4"/>
</dbReference>
<dbReference type="SMR" id="P25819"/>
<dbReference type="BioGRID" id="14943">
    <property type="interactions" value="7"/>
</dbReference>
<dbReference type="FunCoup" id="P25819">
    <property type="interactions" value="2019"/>
</dbReference>
<dbReference type="IntAct" id="P25819">
    <property type="interactions" value="3"/>
</dbReference>
<dbReference type="STRING" id="3702.P25819"/>
<dbReference type="PeroxiBase" id="5141">
    <property type="entry name" value="AtKat02"/>
</dbReference>
<dbReference type="iPTMnet" id="P25819"/>
<dbReference type="SwissPalm" id="P25819"/>
<dbReference type="PaxDb" id="3702-AT4G35090.1"/>
<dbReference type="ProteomicsDB" id="223867">
    <molecule id="P25819-1"/>
</dbReference>
<dbReference type="EnsemblPlants" id="AT4G35090.1">
    <molecule id="P25819-1"/>
    <property type="protein sequence ID" value="AT4G35090.1"/>
    <property type="gene ID" value="AT4G35090"/>
</dbReference>
<dbReference type="GeneID" id="829661"/>
<dbReference type="Gramene" id="AT4G35090.1">
    <molecule id="P25819-1"/>
    <property type="protein sequence ID" value="AT4G35090.1"/>
    <property type="gene ID" value="AT4G35090"/>
</dbReference>
<dbReference type="KEGG" id="ath:AT4G35090"/>
<dbReference type="Araport" id="AT4G35090"/>
<dbReference type="TAIR" id="AT4G35090">
    <property type="gene designation" value="CAT2"/>
</dbReference>
<dbReference type="eggNOG" id="KOG0047">
    <property type="taxonomic scope" value="Eukaryota"/>
</dbReference>
<dbReference type="InParanoid" id="P25819"/>
<dbReference type="OrthoDB" id="1022257at2759"/>
<dbReference type="PhylomeDB" id="P25819"/>
<dbReference type="BioCyc" id="MetaCyc:AT4G35090-MONOMER"/>
<dbReference type="CD-CODE" id="4299E36E">
    <property type="entry name" value="Nucleolus"/>
</dbReference>
<dbReference type="PRO" id="PR:P25819"/>
<dbReference type="Proteomes" id="UP000006548">
    <property type="component" value="Chromosome 4"/>
</dbReference>
<dbReference type="ExpressionAtlas" id="P25819">
    <property type="expression patterns" value="baseline and differential"/>
</dbReference>
<dbReference type="GO" id="GO:0005829">
    <property type="term" value="C:cytosol"/>
    <property type="evidence" value="ECO:0007005"/>
    <property type="project" value="TAIR"/>
</dbReference>
<dbReference type="GO" id="GO:0022626">
    <property type="term" value="C:cytosolic ribosome"/>
    <property type="evidence" value="ECO:0007005"/>
    <property type="project" value="TAIR"/>
</dbReference>
<dbReference type="GO" id="GO:0005739">
    <property type="term" value="C:mitochondrion"/>
    <property type="evidence" value="ECO:0007005"/>
    <property type="project" value="TAIR"/>
</dbReference>
<dbReference type="GO" id="GO:0005782">
    <property type="term" value="C:peroxisomal matrix"/>
    <property type="evidence" value="ECO:0007669"/>
    <property type="project" value="UniProtKB-SubCell"/>
</dbReference>
<dbReference type="GO" id="GO:0005777">
    <property type="term" value="C:peroxisome"/>
    <property type="evidence" value="ECO:0007005"/>
    <property type="project" value="TAIR"/>
</dbReference>
<dbReference type="GO" id="GO:0005886">
    <property type="term" value="C:plasma membrane"/>
    <property type="evidence" value="ECO:0007005"/>
    <property type="project" value="TAIR"/>
</dbReference>
<dbReference type="GO" id="GO:0010319">
    <property type="term" value="C:stromule"/>
    <property type="evidence" value="ECO:0000314"/>
    <property type="project" value="TAIR"/>
</dbReference>
<dbReference type="GO" id="GO:0004096">
    <property type="term" value="F:catalase activity"/>
    <property type="evidence" value="ECO:0000315"/>
    <property type="project" value="TAIR"/>
</dbReference>
<dbReference type="GO" id="GO:0050897">
    <property type="term" value="F:cobalt ion binding"/>
    <property type="evidence" value="ECO:0007005"/>
    <property type="project" value="TAIR"/>
</dbReference>
<dbReference type="GO" id="GO:0020037">
    <property type="term" value="F:heme binding"/>
    <property type="evidence" value="ECO:0007669"/>
    <property type="project" value="InterPro"/>
</dbReference>
<dbReference type="GO" id="GO:0008219">
    <property type="term" value="P:cell death"/>
    <property type="evidence" value="ECO:0000315"/>
    <property type="project" value="TAIR"/>
</dbReference>
<dbReference type="GO" id="GO:0045454">
    <property type="term" value="P:cell redox homeostasis"/>
    <property type="evidence" value="ECO:0000315"/>
    <property type="project" value="TAIR"/>
</dbReference>
<dbReference type="GO" id="GO:0006995">
    <property type="term" value="P:cellular response to nitrogen starvation"/>
    <property type="evidence" value="ECO:0000270"/>
    <property type="project" value="TAIR"/>
</dbReference>
<dbReference type="GO" id="GO:0016036">
    <property type="term" value="P:cellular response to phosphate starvation"/>
    <property type="evidence" value="ECO:0000270"/>
    <property type="project" value="TAIR"/>
</dbReference>
<dbReference type="GO" id="GO:0009970">
    <property type="term" value="P:cellular response to sulfate starvation"/>
    <property type="evidence" value="ECO:0000270"/>
    <property type="project" value="TAIR"/>
</dbReference>
<dbReference type="GO" id="GO:0042744">
    <property type="term" value="P:hydrogen peroxide catabolic process"/>
    <property type="evidence" value="ECO:0007669"/>
    <property type="project" value="UniProtKB-KW"/>
</dbReference>
<dbReference type="GO" id="GO:0009648">
    <property type="term" value="P:photoperiodism"/>
    <property type="evidence" value="ECO:0000315"/>
    <property type="project" value="TAIR"/>
</dbReference>
<dbReference type="GO" id="GO:0009409">
    <property type="term" value="P:response to cold"/>
    <property type="evidence" value="ECO:0000270"/>
    <property type="project" value="TAIR"/>
</dbReference>
<dbReference type="GO" id="GO:0009416">
    <property type="term" value="P:response to light stimulus"/>
    <property type="evidence" value="ECO:0000270"/>
    <property type="project" value="TAIR"/>
</dbReference>
<dbReference type="GO" id="GO:0006979">
    <property type="term" value="P:response to oxidative stress"/>
    <property type="evidence" value="ECO:0000315"/>
    <property type="project" value="TAIR"/>
</dbReference>
<dbReference type="CDD" id="cd08154">
    <property type="entry name" value="catalase_clade_1"/>
    <property type="match status" value="1"/>
</dbReference>
<dbReference type="FunFam" id="2.40.180.10:FF:000002">
    <property type="entry name" value="Catalase"/>
    <property type="match status" value="1"/>
</dbReference>
<dbReference type="Gene3D" id="2.40.180.10">
    <property type="entry name" value="Catalase core domain"/>
    <property type="match status" value="1"/>
</dbReference>
<dbReference type="InterPro" id="IPR018028">
    <property type="entry name" value="Catalase"/>
</dbReference>
<dbReference type="InterPro" id="IPR024708">
    <property type="entry name" value="Catalase_AS"/>
</dbReference>
<dbReference type="InterPro" id="IPR024711">
    <property type="entry name" value="Catalase_clade1/3"/>
</dbReference>
<dbReference type="InterPro" id="IPR011614">
    <property type="entry name" value="Catalase_core"/>
</dbReference>
<dbReference type="InterPro" id="IPR002226">
    <property type="entry name" value="Catalase_haem_BS"/>
</dbReference>
<dbReference type="InterPro" id="IPR010582">
    <property type="entry name" value="Catalase_immune_responsive"/>
</dbReference>
<dbReference type="InterPro" id="IPR020835">
    <property type="entry name" value="Catalase_sf"/>
</dbReference>
<dbReference type="PANTHER" id="PTHR11465">
    <property type="entry name" value="CATALASE"/>
    <property type="match status" value="1"/>
</dbReference>
<dbReference type="PANTHER" id="PTHR11465:SF23">
    <property type="entry name" value="CATALASE-2"/>
    <property type="match status" value="1"/>
</dbReference>
<dbReference type="Pfam" id="PF00199">
    <property type="entry name" value="Catalase"/>
    <property type="match status" value="1"/>
</dbReference>
<dbReference type="Pfam" id="PF06628">
    <property type="entry name" value="Catalase-rel"/>
    <property type="match status" value="1"/>
</dbReference>
<dbReference type="PIRSF" id="PIRSF038928">
    <property type="entry name" value="Catalase_clade1-3"/>
    <property type="match status" value="1"/>
</dbReference>
<dbReference type="PRINTS" id="PR00067">
    <property type="entry name" value="CATALASE"/>
</dbReference>
<dbReference type="SMART" id="SM01060">
    <property type="entry name" value="Catalase"/>
    <property type="match status" value="1"/>
</dbReference>
<dbReference type="SUPFAM" id="SSF56634">
    <property type="entry name" value="Heme-dependent catalase-like"/>
    <property type="match status" value="1"/>
</dbReference>
<dbReference type="PROSITE" id="PS00437">
    <property type="entry name" value="CATALASE_1"/>
    <property type="match status" value="1"/>
</dbReference>
<dbReference type="PROSITE" id="PS00438">
    <property type="entry name" value="CATALASE_2"/>
    <property type="match status" value="1"/>
</dbReference>
<dbReference type="PROSITE" id="PS51402">
    <property type="entry name" value="CATALASE_3"/>
    <property type="match status" value="1"/>
</dbReference>
<feature type="chain" id="PRO_0000084931" description="Catalase-2">
    <location>
        <begin position="1"/>
        <end position="492"/>
    </location>
</feature>
<feature type="active site" evidence="2">
    <location>
        <position position="65"/>
    </location>
</feature>
<feature type="active site" evidence="2">
    <location>
        <position position="138"/>
    </location>
</feature>
<feature type="binding site" description="axial binding residue" evidence="1">
    <location>
        <position position="348"/>
    </location>
    <ligand>
        <name>heme</name>
        <dbReference type="ChEBI" id="CHEBI:30413"/>
    </ligand>
    <ligandPart>
        <name>Fe</name>
        <dbReference type="ChEBI" id="CHEBI:18248"/>
    </ligandPart>
</feature>
<feature type="sequence variant" description="In strain: cv. Landsberg erecta.">
    <original>I</original>
    <variation>V</variation>
    <location>
        <position position="421"/>
    </location>
</feature>
<feature type="sequence conflict" description="In Ref. 1; CAA45564." evidence="5" ref="1">
    <original>P</original>
    <variation>L</variation>
    <location>
        <position position="39"/>
    </location>
</feature>
<feature type="sequence conflict" description="In Ref. 1; CAA45564." evidence="5" ref="1">
    <original>E</original>
    <variation>A</variation>
    <location>
        <position position="109"/>
    </location>
</feature>
<feature type="sequence conflict" description="In Ref. 1; CAA45564." evidence="5" ref="1">
    <original>M</original>
    <variation>I</variation>
    <location>
        <position position="154"/>
    </location>
</feature>
<feature type="sequence conflict" description="In Ref. 1; CAA45564." evidence="5" ref="1">
    <original>V</original>
    <variation>L</variation>
    <location>
        <position position="243"/>
    </location>
</feature>
<protein>
    <recommendedName>
        <fullName>Catalase-2</fullName>
        <ecNumber evidence="2">1.11.1.6</ecNumber>
    </recommendedName>
</protein>
<gene>
    <name type="primary">CAT2</name>
    <name type="synonym">CAT</name>
    <name type="ordered locus">At4g35090</name>
    <name type="ORF">M4E13.140</name>
</gene>
<keyword id="KW-0025">Alternative splicing</keyword>
<keyword id="KW-0963">Cytoplasm</keyword>
<keyword id="KW-0349">Heme</keyword>
<keyword id="KW-0376">Hydrogen peroxide</keyword>
<keyword id="KW-0408">Iron</keyword>
<keyword id="KW-0479">Metal-binding</keyword>
<keyword id="KW-0560">Oxidoreductase</keyword>
<keyword id="KW-0575">Peroxidase</keyword>
<keyword id="KW-0576">Peroxisome</keyword>
<keyword id="KW-1185">Reference proteome</keyword>
<comment type="function">
    <text evidence="1">Catalyzes the degradation of hydrogen peroxide (H(2)O(2)) generated by peroxisomal oxidases to water and oxygen, thereby protecting cells from the toxic effects of hydrogen peroxide.</text>
</comment>
<comment type="catalytic activity">
    <reaction evidence="2">
        <text>2 H2O2 = O2 + 2 H2O</text>
        <dbReference type="Rhea" id="RHEA:20309"/>
        <dbReference type="ChEBI" id="CHEBI:15377"/>
        <dbReference type="ChEBI" id="CHEBI:15379"/>
        <dbReference type="ChEBI" id="CHEBI:16240"/>
        <dbReference type="EC" id="1.11.1.6"/>
    </reaction>
</comment>
<comment type="cofactor">
    <cofactor evidence="1">
        <name>heme</name>
        <dbReference type="ChEBI" id="CHEBI:30413"/>
    </cofactor>
</comment>
<comment type="subunit">
    <text evidence="3 4">Homotetramer and heterotetramer (PubMed:25700484). At least six or seven isozymes are produced from a mixture of 3 gene products. Interacts with NCA1 (PubMed:25700484). Interacts with LSD1 (PubMed:23958864).</text>
</comment>
<comment type="subcellular location">
    <subcellularLocation>
        <location evidence="4">Cytoplasm</location>
        <location evidence="4">Cytosol</location>
    </subcellularLocation>
    <subcellularLocation>
        <location evidence="4">Peroxisome matrix</location>
    </subcellularLocation>
</comment>
<comment type="alternative products">
    <event type="alternative splicing"/>
    <isoform>
        <id>P25819-1</id>
        <name>1</name>
        <sequence type="displayed"/>
    </isoform>
    <text>A number of isoforms are produced. According to EST sequences.</text>
</comment>
<comment type="similarity">
    <text evidence="5">Belongs to the catalase family.</text>
</comment>
<organism>
    <name type="scientific">Arabidopsis thaliana</name>
    <name type="common">Mouse-ear cress</name>
    <dbReference type="NCBI Taxonomy" id="3702"/>
    <lineage>
        <taxon>Eukaryota</taxon>
        <taxon>Viridiplantae</taxon>
        <taxon>Streptophyta</taxon>
        <taxon>Embryophyta</taxon>
        <taxon>Tracheophyta</taxon>
        <taxon>Spermatophyta</taxon>
        <taxon>Magnoliopsida</taxon>
        <taxon>eudicotyledons</taxon>
        <taxon>Gunneridae</taxon>
        <taxon>Pentapetalae</taxon>
        <taxon>rosids</taxon>
        <taxon>malvids</taxon>
        <taxon>Brassicales</taxon>
        <taxon>Brassicaceae</taxon>
        <taxon>Camelineae</taxon>
        <taxon>Arabidopsis</taxon>
    </lineage>
</organism>
<evidence type="ECO:0000250" key="1">
    <source>
        <dbReference type="UniProtKB" id="P04040"/>
    </source>
</evidence>
<evidence type="ECO:0000255" key="2">
    <source>
        <dbReference type="PROSITE-ProRule" id="PRU10013"/>
    </source>
</evidence>
<evidence type="ECO:0000269" key="3">
    <source>
    </source>
</evidence>
<evidence type="ECO:0000269" key="4">
    <source>
    </source>
</evidence>
<evidence type="ECO:0000305" key="5"/>
<name>CATA2_ARATH</name>